<keyword id="KW-0002">3D-structure</keyword>
<keyword id="KW-1015">Disulfide bond</keyword>
<keyword id="KW-0391">Immunity</keyword>
<keyword id="KW-0393">Immunoglobulin domain</keyword>
<keyword id="KW-0490">MHC I</keyword>
<keyword id="KW-1185">Reference proteome</keyword>
<keyword id="KW-0964">Secreted</keyword>
<keyword id="KW-0732">Signal</keyword>
<reference key="1">
    <citation type="submission" date="2004-11" db="EMBL/GenBank/DDBJ databases">
        <title>Feline immunodeficiency virus specific tetramer construction and analysis.</title>
        <authorList>
            <person name="Coleman J.K."/>
            <person name="Yamamoto J.K."/>
        </authorList>
    </citation>
    <scope>NUCLEOTIDE SEQUENCE [MRNA]</scope>
</reference>
<gene>
    <name type="primary">B2M</name>
</gene>
<accession>Q5MGS7</accession>
<dbReference type="EMBL" id="AY829266">
    <property type="protein sequence ID" value="AAV88621.1"/>
    <property type="molecule type" value="mRNA"/>
</dbReference>
<dbReference type="RefSeq" id="NP_001009876.1">
    <property type="nucleotide sequence ID" value="NM_001009876.1"/>
</dbReference>
<dbReference type="PDB" id="5XMF">
    <property type="method" value="X-ray"/>
    <property type="resolution" value="2.10 A"/>
    <property type="chains" value="B=21-118"/>
</dbReference>
<dbReference type="PDB" id="5XMM">
    <property type="method" value="X-ray"/>
    <property type="resolution" value="2.90 A"/>
    <property type="chains" value="B=21-118"/>
</dbReference>
<dbReference type="PDB" id="7XQS">
    <property type="method" value="X-ray"/>
    <property type="resolution" value="2.69 A"/>
    <property type="chains" value="B=1-118"/>
</dbReference>
<dbReference type="PDB" id="7XQT">
    <property type="method" value="X-ray"/>
    <property type="resolution" value="2.80 A"/>
    <property type="chains" value="B=21-118"/>
</dbReference>
<dbReference type="PDB" id="7XQU">
    <property type="method" value="X-ray"/>
    <property type="resolution" value="2.60 A"/>
    <property type="chains" value="B/E=21-118"/>
</dbReference>
<dbReference type="PDBsum" id="5XMF"/>
<dbReference type="PDBsum" id="5XMM"/>
<dbReference type="PDBsum" id="7XQS"/>
<dbReference type="PDBsum" id="7XQT"/>
<dbReference type="PDBsum" id="7XQU"/>
<dbReference type="SMR" id="Q5MGS7"/>
<dbReference type="STRING" id="9685.ENSFCAP00000011347"/>
<dbReference type="PaxDb" id="9685-ENSFCAP00000011347"/>
<dbReference type="GeneID" id="494145"/>
<dbReference type="KEGG" id="fca:494145"/>
<dbReference type="CTD" id="567"/>
<dbReference type="eggNOG" id="ENOG502S8GM">
    <property type="taxonomic scope" value="Eukaryota"/>
</dbReference>
<dbReference type="InParanoid" id="Q5MGS7"/>
<dbReference type="OrthoDB" id="9949628at2759"/>
<dbReference type="TreeFam" id="TF334167"/>
<dbReference type="Proteomes" id="UP000011712">
    <property type="component" value="Unplaced"/>
</dbReference>
<dbReference type="GO" id="GO:0005576">
    <property type="term" value="C:extracellular region"/>
    <property type="evidence" value="ECO:0007669"/>
    <property type="project" value="UniProtKB-SubCell"/>
</dbReference>
<dbReference type="GO" id="GO:0031902">
    <property type="term" value="C:late endosome membrane"/>
    <property type="evidence" value="ECO:0000318"/>
    <property type="project" value="GO_Central"/>
</dbReference>
<dbReference type="GO" id="GO:0005765">
    <property type="term" value="C:lysosomal membrane"/>
    <property type="evidence" value="ECO:0000318"/>
    <property type="project" value="GO_Central"/>
</dbReference>
<dbReference type="GO" id="GO:0042612">
    <property type="term" value="C:MHC class I protein complex"/>
    <property type="evidence" value="ECO:0007669"/>
    <property type="project" value="UniProtKB-KW"/>
</dbReference>
<dbReference type="GO" id="GO:0042613">
    <property type="term" value="C:MHC class II protein complex"/>
    <property type="evidence" value="ECO:0000318"/>
    <property type="project" value="GO_Central"/>
</dbReference>
<dbReference type="GO" id="GO:0023026">
    <property type="term" value="F:MHC class II protein complex binding"/>
    <property type="evidence" value="ECO:0000318"/>
    <property type="project" value="GO_Central"/>
</dbReference>
<dbReference type="GO" id="GO:0042605">
    <property type="term" value="F:peptide antigen binding"/>
    <property type="evidence" value="ECO:0000318"/>
    <property type="project" value="GO_Central"/>
</dbReference>
<dbReference type="GO" id="GO:0019886">
    <property type="term" value="P:antigen processing and presentation of exogenous peptide antigen via MHC class II"/>
    <property type="evidence" value="ECO:0000318"/>
    <property type="project" value="GO_Central"/>
</dbReference>
<dbReference type="GO" id="GO:0002474">
    <property type="term" value="P:antigen processing and presentation of peptide antigen via MHC class I"/>
    <property type="evidence" value="ECO:0007669"/>
    <property type="project" value="UniProtKB-KW"/>
</dbReference>
<dbReference type="GO" id="GO:0006955">
    <property type="term" value="P:immune response"/>
    <property type="evidence" value="ECO:0007669"/>
    <property type="project" value="InterPro"/>
</dbReference>
<dbReference type="GO" id="GO:0002503">
    <property type="term" value="P:peptide antigen assembly with MHC class II protein complex"/>
    <property type="evidence" value="ECO:0000318"/>
    <property type="project" value="GO_Central"/>
</dbReference>
<dbReference type="GO" id="GO:0050778">
    <property type="term" value="P:positive regulation of immune response"/>
    <property type="evidence" value="ECO:0000318"/>
    <property type="project" value="GO_Central"/>
</dbReference>
<dbReference type="GO" id="GO:0050870">
    <property type="term" value="P:positive regulation of T cell activation"/>
    <property type="evidence" value="ECO:0000318"/>
    <property type="project" value="GO_Central"/>
</dbReference>
<dbReference type="CDD" id="cd05770">
    <property type="entry name" value="IgC1_beta2m"/>
    <property type="match status" value="1"/>
</dbReference>
<dbReference type="FunFam" id="2.60.40.10:FF:001005">
    <property type="entry name" value="Beta-2-microglobulin"/>
    <property type="match status" value="1"/>
</dbReference>
<dbReference type="Gene3D" id="2.60.40.10">
    <property type="entry name" value="Immunoglobulins"/>
    <property type="match status" value="1"/>
</dbReference>
<dbReference type="InterPro" id="IPR015707">
    <property type="entry name" value="B2Microglobulin"/>
</dbReference>
<dbReference type="InterPro" id="IPR007110">
    <property type="entry name" value="Ig-like_dom"/>
</dbReference>
<dbReference type="InterPro" id="IPR036179">
    <property type="entry name" value="Ig-like_dom_sf"/>
</dbReference>
<dbReference type="InterPro" id="IPR013783">
    <property type="entry name" value="Ig-like_fold"/>
</dbReference>
<dbReference type="InterPro" id="IPR003006">
    <property type="entry name" value="Ig/MHC_CS"/>
</dbReference>
<dbReference type="InterPro" id="IPR003597">
    <property type="entry name" value="Ig_C1-set"/>
</dbReference>
<dbReference type="InterPro" id="IPR050160">
    <property type="entry name" value="MHC/Immunoglobulin"/>
</dbReference>
<dbReference type="PANTHER" id="PTHR19944:SF62">
    <property type="entry name" value="BETA-2-MICROGLOBULIN"/>
    <property type="match status" value="1"/>
</dbReference>
<dbReference type="PANTHER" id="PTHR19944">
    <property type="entry name" value="MHC CLASS II-RELATED"/>
    <property type="match status" value="1"/>
</dbReference>
<dbReference type="Pfam" id="PF07654">
    <property type="entry name" value="C1-set"/>
    <property type="match status" value="1"/>
</dbReference>
<dbReference type="SMART" id="SM00407">
    <property type="entry name" value="IGc1"/>
    <property type="match status" value="1"/>
</dbReference>
<dbReference type="SUPFAM" id="SSF48726">
    <property type="entry name" value="Immunoglobulin"/>
    <property type="match status" value="1"/>
</dbReference>
<dbReference type="PROSITE" id="PS50835">
    <property type="entry name" value="IG_LIKE"/>
    <property type="match status" value="1"/>
</dbReference>
<dbReference type="PROSITE" id="PS00290">
    <property type="entry name" value="IG_MHC"/>
    <property type="match status" value="1"/>
</dbReference>
<proteinExistence type="evidence at protein level"/>
<comment type="function">
    <text evidence="1">Component of the class I major histocompatibility complex (MHC). Involved in the presentation of peptide antigens to the immune system (By similarity).</text>
</comment>
<comment type="subunit">
    <text evidence="1">Heterodimer of an alpha chain and a beta chain. Beta-2-microglobulin is the beta-chain of major histocompatibility complex class I molecules (By similarity).</text>
</comment>
<comment type="subcellular location">
    <subcellularLocation>
        <location evidence="1">Secreted</location>
    </subcellularLocation>
</comment>
<comment type="similarity">
    <text evidence="4">Belongs to the beta-2-microglobulin family.</text>
</comment>
<feature type="signal peptide" evidence="2">
    <location>
        <begin position="1"/>
        <end position="20"/>
    </location>
</feature>
<feature type="chain" id="PRO_0000041823" description="Beta-2-microglobulin">
    <location>
        <begin position="21"/>
        <end position="118"/>
    </location>
</feature>
<feature type="domain" description="Ig-like C1-type">
    <location>
        <begin position="25"/>
        <end position="113"/>
    </location>
</feature>
<feature type="disulfide bond" evidence="3">
    <location>
        <begin position="45"/>
        <end position="99"/>
    </location>
</feature>
<feature type="strand" evidence="5">
    <location>
        <begin position="26"/>
        <end position="33"/>
    </location>
</feature>
<feature type="strand" evidence="6">
    <location>
        <begin position="37"/>
        <end position="39"/>
    </location>
</feature>
<feature type="strand" evidence="5">
    <location>
        <begin position="41"/>
        <end position="53"/>
    </location>
</feature>
<feature type="strand" evidence="5">
    <location>
        <begin position="56"/>
        <end position="61"/>
    </location>
</feature>
<feature type="strand" evidence="6">
    <location>
        <begin position="64"/>
        <end position="66"/>
    </location>
</feature>
<feature type="strand" evidence="5">
    <location>
        <begin position="81"/>
        <end position="89"/>
    </location>
</feature>
<feature type="strand" evidence="5">
    <location>
        <begin position="97"/>
        <end position="102"/>
    </location>
</feature>
<feature type="strand" evidence="5">
    <location>
        <begin position="110"/>
        <end position="113"/>
    </location>
</feature>
<evidence type="ECO:0000250" key="1"/>
<evidence type="ECO:0000255" key="2"/>
<evidence type="ECO:0000255" key="3">
    <source>
        <dbReference type="PROSITE-ProRule" id="PRU00114"/>
    </source>
</evidence>
<evidence type="ECO:0000305" key="4"/>
<evidence type="ECO:0007829" key="5">
    <source>
        <dbReference type="PDB" id="5XMF"/>
    </source>
</evidence>
<evidence type="ECO:0007829" key="6">
    <source>
        <dbReference type="PDB" id="7XQT"/>
    </source>
</evidence>
<organism>
    <name type="scientific">Felis catus</name>
    <name type="common">Cat</name>
    <name type="synonym">Felis silvestris catus</name>
    <dbReference type="NCBI Taxonomy" id="9685"/>
    <lineage>
        <taxon>Eukaryota</taxon>
        <taxon>Metazoa</taxon>
        <taxon>Chordata</taxon>
        <taxon>Craniata</taxon>
        <taxon>Vertebrata</taxon>
        <taxon>Euteleostomi</taxon>
        <taxon>Mammalia</taxon>
        <taxon>Eutheria</taxon>
        <taxon>Laurasiatheria</taxon>
        <taxon>Carnivora</taxon>
        <taxon>Feliformia</taxon>
        <taxon>Felidae</taxon>
        <taxon>Felinae</taxon>
        <taxon>Felis</taxon>
    </lineage>
</organism>
<sequence length="118" mass="13698">MARFVVLVLLGLLYLSHLDAVQHSPKVQVYSRHPAENGKPNFLNCYVSGFHPPQIDITLMKNGKKMEAEQTDLSFNRDWTFYLLVHTEFTPTVEDEYSCQVNHTTLSEPKVVKWDRDM</sequence>
<name>B2MG_FELCA</name>
<protein>
    <recommendedName>
        <fullName>Beta-2-microglobulin</fullName>
    </recommendedName>
</protein>